<protein>
    <recommendedName>
        <fullName evidence="1">Nucleotide-binding protein P9515_05441</fullName>
    </recommendedName>
</protein>
<sequence>MAENFSFDVVSDFDRQELVNALDQVKREISQRYDLKGTETILELEKENIFITTNSELTLNSVIDIIRQKAIKRKLSLKIFEYKSIEAVSGNKVKQTITLKKGLNQEIAKKISKNLRDEIKKINVSINGETLRVMSKSKNDLQLAIKLLENLEETYKIPLQANNYR</sequence>
<comment type="function">
    <text evidence="1">Nucleotide-binding protein.</text>
</comment>
<comment type="similarity">
    <text evidence="1">Belongs to the YajQ family.</text>
</comment>
<organism>
    <name type="scientific">Prochlorococcus marinus (strain MIT 9515)</name>
    <dbReference type="NCBI Taxonomy" id="167542"/>
    <lineage>
        <taxon>Bacteria</taxon>
        <taxon>Bacillati</taxon>
        <taxon>Cyanobacteriota</taxon>
        <taxon>Cyanophyceae</taxon>
        <taxon>Synechococcales</taxon>
        <taxon>Prochlorococcaceae</taxon>
        <taxon>Prochlorococcus</taxon>
    </lineage>
</organism>
<keyword id="KW-0547">Nucleotide-binding</keyword>
<dbReference type="EMBL" id="CP000552">
    <property type="protein sequence ID" value="ABM71753.1"/>
    <property type="molecule type" value="Genomic_DNA"/>
</dbReference>
<dbReference type="RefSeq" id="WP_011819860.1">
    <property type="nucleotide sequence ID" value="NC_008817.1"/>
</dbReference>
<dbReference type="SMR" id="A2BVE2"/>
<dbReference type="STRING" id="167542.P9515_05441"/>
<dbReference type="GeneID" id="60201110"/>
<dbReference type="KEGG" id="pmc:P9515_05441"/>
<dbReference type="eggNOG" id="COG1666">
    <property type="taxonomic scope" value="Bacteria"/>
</dbReference>
<dbReference type="HOGENOM" id="CLU_099839_0_0_3"/>
<dbReference type="OrthoDB" id="9801447at2"/>
<dbReference type="Proteomes" id="UP000001589">
    <property type="component" value="Chromosome"/>
</dbReference>
<dbReference type="GO" id="GO:0005829">
    <property type="term" value="C:cytosol"/>
    <property type="evidence" value="ECO:0007669"/>
    <property type="project" value="TreeGrafter"/>
</dbReference>
<dbReference type="GO" id="GO:0000166">
    <property type="term" value="F:nucleotide binding"/>
    <property type="evidence" value="ECO:0007669"/>
    <property type="project" value="TreeGrafter"/>
</dbReference>
<dbReference type="CDD" id="cd11740">
    <property type="entry name" value="YajQ_like"/>
    <property type="match status" value="1"/>
</dbReference>
<dbReference type="Gene3D" id="3.30.70.860">
    <property type="match status" value="1"/>
</dbReference>
<dbReference type="Gene3D" id="3.30.70.990">
    <property type="entry name" value="YajQ-like, domain 2"/>
    <property type="match status" value="1"/>
</dbReference>
<dbReference type="HAMAP" id="MF_00632">
    <property type="entry name" value="YajQ"/>
    <property type="match status" value="1"/>
</dbReference>
<dbReference type="InterPro" id="IPR007551">
    <property type="entry name" value="DUF520"/>
</dbReference>
<dbReference type="InterPro" id="IPR035571">
    <property type="entry name" value="UPF0234-like_C"/>
</dbReference>
<dbReference type="InterPro" id="IPR035570">
    <property type="entry name" value="UPF0234_N"/>
</dbReference>
<dbReference type="InterPro" id="IPR036183">
    <property type="entry name" value="YajQ-like_sf"/>
</dbReference>
<dbReference type="NCBIfam" id="NF003819">
    <property type="entry name" value="PRK05412.1"/>
    <property type="match status" value="1"/>
</dbReference>
<dbReference type="PANTHER" id="PTHR30476">
    <property type="entry name" value="UPF0234 PROTEIN YAJQ"/>
    <property type="match status" value="1"/>
</dbReference>
<dbReference type="PANTHER" id="PTHR30476:SF0">
    <property type="entry name" value="UPF0234 PROTEIN YAJQ"/>
    <property type="match status" value="1"/>
</dbReference>
<dbReference type="Pfam" id="PF04461">
    <property type="entry name" value="DUF520"/>
    <property type="match status" value="1"/>
</dbReference>
<dbReference type="SUPFAM" id="SSF89963">
    <property type="entry name" value="YajQ-like"/>
    <property type="match status" value="2"/>
</dbReference>
<proteinExistence type="inferred from homology"/>
<reference key="1">
    <citation type="journal article" date="2007" name="PLoS Genet.">
        <title>Patterns and implications of gene gain and loss in the evolution of Prochlorococcus.</title>
        <authorList>
            <person name="Kettler G.C."/>
            <person name="Martiny A.C."/>
            <person name="Huang K."/>
            <person name="Zucker J."/>
            <person name="Coleman M.L."/>
            <person name="Rodrigue S."/>
            <person name="Chen F."/>
            <person name="Lapidus A."/>
            <person name="Ferriera S."/>
            <person name="Johnson J."/>
            <person name="Steglich C."/>
            <person name="Church G.M."/>
            <person name="Richardson P."/>
            <person name="Chisholm S.W."/>
        </authorList>
    </citation>
    <scope>NUCLEOTIDE SEQUENCE [LARGE SCALE GENOMIC DNA]</scope>
    <source>
        <strain>MIT 9515</strain>
    </source>
</reference>
<gene>
    <name type="ordered locus">P9515_05441</name>
</gene>
<feature type="chain" id="PRO_1000147315" description="Nucleotide-binding protein P9515_05441">
    <location>
        <begin position="1"/>
        <end position="165"/>
    </location>
</feature>
<name>Y544_PROM5</name>
<accession>A2BVE2</accession>
<evidence type="ECO:0000255" key="1">
    <source>
        <dbReference type="HAMAP-Rule" id="MF_00632"/>
    </source>
</evidence>